<organism>
    <name type="scientific">Escherichia phage T5</name>
    <name type="common">Enterobacteria phage T5</name>
    <dbReference type="NCBI Taxonomy" id="2695836"/>
    <lineage>
        <taxon>Viruses</taxon>
        <taxon>Duplodnaviria</taxon>
        <taxon>Heunggongvirae</taxon>
        <taxon>Uroviricota</taxon>
        <taxon>Caudoviricetes</taxon>
        <taxon>Demerecviridae</taxon>
        <taxon>Markadamsvirinae</taxon>
        <taxon>Tequintavirus</taxon>
        <taxon>Tequintavirus T5</taxon>
    </lineage>
</organism>
<feature type="chain" id="PRO_0000432947" description="Distal tail protein pb9">
    <location>
        <begin position="1"/>
        <end position="204"/>
    </location>
</feature>
<feature type="turn" evidence="16">
    <location>
        <begin position="6"/>
        <end position="8"/>
    </location>
</feature>
<feature type="helix" evidence="16">
    <location>
        <begin position="13"/>
        <end position="15"/>
    </location>
</feature>
<feature type="strand" evidence="16">
    <location>
        <begin position="18"/>
        <end position="25"/>
    </location>
</feature>
<feature type="strand" evidence="16">
    <location>
        <begin position="47"/>
        <end position="53"/>
    </location>
</feature>
<feature type="helix" evidence="16">
    <location>
        <begin position="59"/>
        <end position="74"/>
    </location>
</feature>
<feature type="strand" evidence="16">
    <location>
        <begin position="79"/>
        <end position="82"/>
    </location>
</feature>
<feature type="helix" evidence="16">
    <location>
        <begin position="84"/>
        <end position="86"/>
    </location>
</feature>
<feature type="strand" evidence="16">
    <location>
        <begin position="91"/>
        <end position="93"/>
    </location>
</feature>
<feature type="helix" evidence="15">
    <location>
        <begin position="95"/>
        <end position="97"/>
    </location>
</feature>
<feature type="strand" evidence="16">
    <location>
        <begin position="106"/>
        <end position="112"/>
    </location>
</feature>
<feature type="strand" evidence="15">
    <location>
        <begin position="117"/>
        <end position="119"/>
    </location>
</feature>
<feature type="strand" evidence="16">
    <location>
        <begin position="126"/>
        <end position="129"/>
    </location>
</feature>
<feature type="strand" evidence="16">
    <location>
        <begin position="135"/>
        <end position="144"/>
    </location>
</feature>
<feature type="strand" evidence="16">
    <location>
        <begin position="147"/>
        <end position="154"/>
    </location>
</feature>
<feature type="strand" evidence="16">
    <location>
        <begin position="172"/>
        <end position="178"/>
    </location>
</feature>
<feature type="helix" evidence="16">
    <location>
        <begin position="180"/>
        <end position="182"/>
    </location>
</feature>
<feature type="strand" evidence="16">
    <location>
        <begin position="191"/>
        <end position="193"/>
    </location>
</feature>
<feature type="strand" evidence="16">
    <location>
        <begin position="197"/>
        <end position="202"/>
    </location>
</feature>
<protein>
    <recommendedName>
        <fullName evidence="3">Distal tail protein pb9</fullName>
        <shortName evidence="4">DTP-pb9</shortName>
        <shortName evidence="3">Dit</shortName>
    </recommendedName>
    <alternativeName>
        <fullName evidence="3">Tail protein pb9</fullName>
    </alternativeName>
</protein>
<organismHost>
    <name type="scientific">Escherichia coli</name>
    <dbReference type="NCBI Taxonomy" id="562"/>
</organismHost>
<comment type="function">
    <text evidence="2 5 6">Forms the simplified baseplate, together with the p132 collar protein, the baseplate tube protein p140 and baseplate hub protein pb3.</text>
</comment>
<comment type="subunit">
    <text evidence="1 2">Homohexamer (PubMed:24198424, PubMed:36961893). Interacts with baseplate tube protein p140 and baseplate hub protein pb3 (PubMed:36961893).</text>
</comment>
<comment type="subcellular location">
    <subcellularLocation>
        <location evidence="2">Virion</location>
    </subcellularLocation>
    <text evidence="1 2">Component of the tail (PubMed:24198424, PubMed:36961893). Located between the baseplate tube protein p140, the collar protein p132 ring and the baseplate hub protein pb3 trimer (PubMed:36961893).</text>
</comment>
<comment type="domain">
    <text evidence="2">Possesses OB-fold domains probably serving host adhesion properties.</text>
</comment>
<evidence type="ECO:0000269" key="1">
    <source>
    </source>
</evidence>
<evidence type="ECO:0000269" key="2">
    <source>
    </source>
</evidence>
<evidence type="ECO:0000303" key="3">
    <source>
    </source>
</evidence>
<evidence type="ECO:0000305" key="4"/>
<evidence type="ECO:0000305" key="5">
    <source>
    </source>
</evidence>
<evidence type="ECO:0000305" key="6">
    <source>
    </source>
</evidence>
<evidence type="ECO:0000312" key="7">
    <source>
        <dbReference type="EMBL" id="AAQ92755.1"/>
    </source>
</evidence>
<evidence type="ECO:0000312" key="8">
    <source>
        <dbReference type="EMBL" id="AAU05274.1"/>
    </source>
</evidence>
<evidence type="ECO:0000312" key="9">
    <source>
        <dbReference type="EMBL" id="AAX12065.1"/>
    </source>
</evidence>
<evidence type="ECO:0000312" key="10">
    <source>
        <dbReference type="PDB" id="4JMQ"/>
    </source>
</evidence>
<evidence type="ECO:0007744" key="11">
    <source>
        <dbReference type="PDB" id="7QG9"/>
    </source>
</evidence>
<evidence type="ECO:0007744" key="12">
    <source>
        <dbReference type="PDB" id="7ZHJ"/>
    </source>
</evidence>
<evidence type="ECO:0007744" key="13">
    <source>
        <dbReference type="PDB" id="7ZN2"/>
    </source>
</evidence>
<evidence type="ECO:0007744" key="14">
    <source>
        <dbReference type="PDB" id="7ZQB"/>
    </source>
</evidence>
<evidence type="ECO:0007829" key="15">
    <source>
        <dbReference type="PDB" id="4JMQ"/>
    </source>
</evidence>
<evidence type="ECO:0007829" key="16">
    <source>
        <dbReference type="PDB" id="6F2M"/>
    </source>
</evidence>
<sequence>MRLPDPYTNPEYPGLGFESVNLVDNDPMIRDELPNGKVKEVKISAQYWGINISYPELFPDEYAFLDSRLLEYKRTGDYLDVLLPQYEAFRVRGDTKSVTIPAGQKGSQIILNTNGTLTGQPKAGDLFKLSTHPKVYKITNFSSSGNVWNISLYPDLFITTTGSEKPVFNGILFRTKLMNGDSFGSTLNNNGTYSGISLSLRESL</sequence>
<name>DIT_BPT5</name>
<gene>
    <name type="primary">D16</name>
    <name evidence="9" type="ORF">ORF128</name>
    <name evidence="7" type="ORF">T5.139</name>
    <name evidence="8" type="ORF">T5p135</name>
</gene>
<keyword id="KW-0002">3D-structure</keyword>
<keyword id="KW-0426">Late protein</keyword>
<keyword id="KW-1185">Reference proteome</keyword>
<keyword id="KW-1227">Viral tail protein</keyword>
<keyword id="KW-0946">Virion</keyword>
<dbReference type="EMBL" id="AY543070">
    <property type="protein sequence ID" value="AAQ92755.1"/>
    <property type="molecule type" value="Genomic_DNA"/>
</dbReference>
<dbReference type="EMBL" id="AY692264">
    <property type="protein sequence ID" value="AAU05274.1"/>
    <property type="molecule type" value="Genomic_DNA"/>
</dbReference>
<dbReference type="EMBL" id="AY587007">
    <property type="protein sequence ID" value="AAX12065.1"/>
    <property type="molecule type" value="Genomic_DNA"/>
</dbReference>
<dbReference type="RefSeq" id="YP_006967.1">
    <property type="nucleotide sequence ID" value="NC_005859.1"/>
</dbReference>
<dbReference type="PDB" id="4JMQ">
    <property type="method" value="X-ray"/>
    <property type="resolution" value="1.90 A"/>
    <property type="chains" value="A/B/C/D=1-204"/>
</dbReference>
<dbReference type="PDB" id="5MF2">
    <property type="method" value="X-ray"/>
    <property type="resolution" value="2.00 A"/>
    <property type="chains" value="A/B/C/D=1-204"/>
</dbReference>
<dbReference type="PDB" id="6F2M">
    <property type="method" value="X-ray"/>
    <property type="resolution" value="1.80 A"/>
    <property type="chains" value="A/B/C/D=1-204"/>
</dbReference>
<dbReference type="PDB" id="7QG9">
    <property type="method" value="EM"/>
    <property type="resolution" value="3.45 A"/>
    <property type="chains" value="V/W/X/Y/Z/a=1-204"/>
</dbReference>
<dbReference type="PDB" id="7ZHJ">
    <property type="method" value="EM"/>
    <property type="resolution" value="3.53 A"/>
    <property type="chains" value="V/W/X/Y/Z/a=1-204"/>
</dbReference>
<dbReference type="PDB" id="7ZN2">
    <property type="method" value="EM"/>
    <property type="resolution" value="4.29 A"/>
    <property type="chains" value="V/W/X/Y/Z/a=1-204"/>
</dbReference>
<dbReference type="PDB" id="7ZQB">
    <property type="method" value="EM"/>
    <property type="resolution" value="3.88 A"/>
    <property type="chains" value="V/W/X/Y/Z/a=1-204"/>
</dbReference>
<dbReference type="PDB" id="9IOZ">
    <property type="method" value="EM"/>
    <property type="resolution" value="3.90 A"/>
    <property type="chains" value="D/E/F/G/H/I=1-204"/>
</dbReference>
<dbReference type="PDBsum" id="4JMQ"/>
<dbReference type="PDBsum" id="5MF2"/>
<dbReference type="PDBsum" id="6F2M"/>
<dbReference type="PDBsum" id="7QG9"/>
<dbReference type="PDBsum" id="7ZHJ"/>
<dbReference type="PDBsum" id="7ZN2"/>
<dbReference type="PDBsum" id="7ZQB"/>
<dbReference type="PDBsum" id="9IOZ"/>
<dbReference type="EMDB" id="EMD-13953"/>
<dbReference type="EMDB" id="EMD-14733"/>
<dbReference type="EMDB" id="EMD-14799"/>
<dbReference type="EMDB" id="EMD-14869"/>
<dbReference type="EMDB" id="EMD-60750"/>
<dbReference type="SMR" id="Q6QGE8"/>
<dbReference type="GeneID" id="2777628"/>
<dbReference type="KEGG" id="vg:2777628"/>
<dbReference type="EvolutionaryTrace" id="Q6QGE8"/>
<dbReference type="Proteomes" id="UP000002107">
    <property type="component" value="Genome"/>
</dbReference>
<dbReference type="Proteomes" id="UP000002141">
    <property type="component" value="Segment"/>
</dbReference>
<dbReference type="Proteomes" id="UP000002503">
    <property type="component" value="Segment"/>
</dbReference>
<dbReference type="GO" id="GO:0098015">
    <property type="term" value="C:virus tail"/>
    <property type="evidence" value="ECO:0000314"/>
    <property type="project" value="UniProtKB"/>
</dbReference>
<dbReference type="GO" id="GO:0098025">
    <property type="term" value="C:virus tail, baseplate"/>
    <property type="evidence" value="ECO:0000314"/>
    <property type="project" value="CACAO"/>
</dbReference>
<dbReference type="Gene3D" id="2.40.30.290">
    <property type="match status" value="1"/>
</dbReference>
<dbReference type="Gene3D" id="3.30.200.190">
    <property type="match status" value="1"/>
</dbReference>
<dbReference type="InterPro" id="IPR048416">
    <property type="entry name" value="DTP-pb9_A-dom_C"/>
</dbReference>
<dbReference type="InterPro" id="IPR048417">
    <property type="entry name" value="DTP-pb9_A-dom_N"/>
</dbReference>
<dbReference type="InterPro" id="IPR048415">
    <property type="entry name" value="DTP-pb9_B-dom"/>
</dbReference>
<dbReference type="Pfam" id="PF21424">
    <property type="entry name" value="DTP-pb9_A-dom_C"/>
    <property type="match status" value="1"/>
</dbReference>
<dbReference type="Pfam" id="PF21425">
    <property type="entry name" value="DTP-pb9_A-dom_N"/>
    <property type="match status" value="1"/>
</dbReference>
<dbReference type="Pfam" id="PF21430">
    <property type="entry name" value="DTP-pb9_B-dom"/>
    <property type="match status" value="1"/>
</dbReference>
<proteinExistence type="evidence at protein level"/>
<accession>Q6QGE8</accession>
<reference key="1">
    <citation type="submission" date="2004-01" db="EMBL/GenBank/DDBJ databases">
        <title>Bacteriophage T5 complete genome.</title>
        <authorList>
            <person name="Ksenzenko V.N."/>
            <person name="Kaliman A.V."/>
            <person name="Krutilina A.I."/>
            <person name="Shlyapnikov M.G."/>
        </authorList>
    </citation>
    <scope>NUCLEOTIDE SEQUENCE [LARGE SCALE GENOMIC DNA]</scope>
</reference>
<reference key="2">
    <citation type="journal article" date="2005" name="Virology">
        <title>Complete genome sequence of bacteriophage T5.</title>
        <authorList>
            <person name="Wang J."/>
            <person name="Jiang Y."/>
            <person name="Vincent M."/>
            <person name="Sun Y."/>
            <person name="Yu H."/>
            <person name="Wang J."/>
            <person name="Bao Q."/>
            <person name="Kong H."/>
            <person name="Hu S."/>
        </authorList>
    </citation>
    <scope>NUCLEOTIDE SEQUENCE [LARGE SCALE GENOMIC DNA]</scope>
    <scope>INDUCTION</scope>
    <source>
        <strain evidence="9">ATCC 11303-B5</strain>
    </source>
</reference>
<reference key="3">
    <citation type="journal article" date="2014" name="J. Virol.">
        <title>Insights into bacteriophage T5 structure from analysis of its morphogenesis genes and protein components.</title>
        <authorList>
            <person name="Zivanovic Y."/>
            <person name="Confalonieri F."/>
            <person name="Ponchon L."/>
            <person name="Lurz R."/>
            <person name="Chami M."/>
            <person name="Flayhan A."/>
            <person name="Renouard M."/>
            <person name="Huet A."/>
            <person name="Decottignies P."/>
            <person name="Davidson A.R."/>
            <person name="Breyton C."/>
            <person name="Boulanger P."/>
        </authorList>
    </citation>
    <scope>NUCLEOTIDE SEQUENCE [LARGE SCALE GENOMIC DNA]</scope>
    <scope>SUBCELLULAR LOCATION</scope>
    <scope>FUNCTION</scope>
    <scope>SUBUNIT</scope>
    <source>
        <strain>St0 deletion mutant</strain>
    </source>
</reference>
<reference evidence="10" key="4">
    <citation type="journal article" date="2014" name="J. Virol.">
        <title>Crystal structure of pb9, the distal tail protein of bacteriophage T5: a conserved structural motif among all siphophages.</title>
        <authorList>
            <person name="Flayhan A."/>
            <person name="Vellieux F.M."/>
            <person name="Lurz R."/>
            <person name="Maury O."/>
            <person name="Contreras-Martel C."/>
            <person name="Girard E."/>
            <person name="Boulanger P."/>
            <person name="Breyton C."/>
        </authorList>
    </citation>
    <scope>X-RAY CRYSTALLOGRAPHY (1.90 ANGSTROMS)</scope>
    <scope>FUNCTION</scope>
    <scope>SUBCELLULAR LOCATION</scope>
</reference>
<reference evidence="11 12 13 14" key="5">
    <citation type="journal article" date="2023" name="Sci. Adv.">
        <title>Structural basis of bacteriophage T5 infection trigger and E. coli cell wall perforation.</title>
        <authorList>
            <person name="Linares R."/>
            <person name="Arnaud C.A."/>
            <person name="Effantin G."/>
            <person name="Darnault C."/>
            <person name="Epalle N.H."/>
            <person name="Boeri Erba E."/>
            <person name="Schoehn G."/>
            <person name="Breyton C."/>
        </authorList>
    </citation>
    <scope>STRUCTURE BY ELECTRON MICROSCOPY (3.45 ANGSTROMS)</scope>
    <scope>FUNCTION</scope>
    <scope>SUBCELLULAR LOCATION</scope>
    <scope>SUBUNIT</scope>
    <scope>INTERACTION WITH BASEPLATE TUBE PROTEIN P140</scope>
    <scope>INTERACTION WITH BASEPLATE HUB PROTEIN PB3</scope>
</reference>